<reference key="1">
    <citation type="journal article" date="1998" name="Science">
        <title>Complete genome sequence of Treponema pallidum, the syphilis spirochete.</title>
        <authorList>
            <person name="Fraser C.M."/>
            <person name="Norris S.J."/>
            <person name="Weinstock G.M."/>
            <person name="White O."/>
            <person name="Sutton G.G."/>
            <person name="Dodson R.J."/>
            <person name="Gwinn M.L."/>
            <person name="Hickey E.K."/>
            <person name="Clayton R.A."/>
            <person name="Ketchum K.A."/>
            <person name="Sodergren E."/>
            <person name="Hardham J.M."/>
            <person name="McLeod M.P."/>
            <person name="Salzberg S.L."/>
            <person name="Peterson J.D."/>
            <person name="Khalak H.G."/>
            <person name="Richardson D.L."/>
            <person name="Howell J.K."/>
            <person name="Chidambaram M."/>
            <person name="Utterback T.R."/>
            <person name="McDonald L.A."/>
            <person name="Artiach P."/>
            <person name="Bowman C."/>
            <person name="Cotton M.D."/>
            <person name="Fujii C."/>
            <person name="Garland S.A."/>
            <person name="Hatch B."/>
            <person name="Horst K."/>
            <person name="Roberts K.M."/>
            <person name="Sandusky M."/>
            <person name="Weidman J.F."/>
            <person name="Smith H.O."/>
            <person name="Venter J.C."/>
        </authorList>
    </citation>
    <scope>NUCLEOTIDE SEQUENCE [LARGE SCALE GENOMIC DNA]</scope>
    <source>
        <strain>Nichols</strain>
    </source>
</reference>
<organism>
    <name type="scientific">Treponema pallidum (strain Nichols)</name>
    <dbReference type="NCBI Taxonomy" id="243276"/>
    <lineage>
        <taxon>Bacteria</taxon>
        <taxon>Pseudomonadati</taxon>
        <taxon>Spirochaetota</taxon>
        <taxon>Spirochaetia</taxon>
        <taxon>Spirochaetales</taxon>
        <taxon>Treponemataceae</taxon>
        <taxon>Treponema</taxon>
    </lineage>
</organism>
<proteinExistence type="inferred from homology"/>
<protein>
    <recommendedName>
        <fullName evidence="1">UvrABC system protein B</fullName>
        <shortName evidence="1">Protein UvrB</shortName>
    </recommendedName>
    <alternativeName>
        <fullName evidence="1">Excinuclease ABC subunit B</fullName>
    </alternativeName>
</protein>
<feature type="chain" id="PRO_0000138442" description="UvrABC system protein B">
    <location>
        <begin position="1"/>
        <end position="668"/>
    </location>
</feature>
<feature type="domain" description="Helicase ATP-binding" evidence="1">
    <location>
        <begin position="25"/>
        <end position="414"/>
    </location>
</feature>
<feature type="domain" description="Helicase C-terminal" evidence="1">
    <location>
        <begin position="431"/>
        <end position="594"/>
    </location>
</feature>
<feature type="domain" description="UVR" evidence="1">
    <location>
        <begin position="627"/>
        <end position="662"/>
    </location>
</feature>
<feature type="short sequence motif" description="Beta-hairpin">
    <location>
        <begin position="91"/>
        <end position="114"/>
    </location>
</feature>
<feature type="binding site" evidence="1">
    <location>
        <begin position="38"/>
        <end position="45"/>
    </location>
    <ligand>
        <name>ATP</name>
        <dbReference type="ChEBI" id="CHEBI:30616"/>
    </ligand>
</feature>
<accession>O83154</accession>
<sequence length="668" mass="76190">MKEFKLHASFQPAGDQIAAIDALVRGLHAGARFQTLKGVTGSGKTFTVANVIARVQKPTLVISHNKTLSAQLYREFKGFFPDNAVEYFVSYYDYYQPESYVPARDLYIEKDASINAEINRMRLSATFSLMERRDVIVVATVSCIYGLGLPESWRDLRIHVEVNQCLDLEDLKRQLVSLQYERNDAVLECGRFRVRGDVIEIFPAYLEEFYRIECDWDRVVRIRRIHPVSGAVLREFEELTVYPAKHFVLKEDAIPRAMDRIRQELDERLVQLTQENKLAEAARLKTRTEYDLEMLGEMGYCHGIENYSAPIAGRKSGEPPVTLLHYFPKDFVLFVDESHVTLPQLGAMYEGDRVRKQNLIDFGFRLPCARDNRPLKDSEFEALLNQAVFISATPGVKERTQSVQIVEQLIRPTGLLDPCIEVRKTDGQIEDICQRVKACSARNERSLVLTLTKKMAEDLTDYFNGLGIRTKYVHSEIETIERVEILTSLRAGECEVLVGINLLREGIDLPEVAFIAILDANIVGFLRSTTSLIQIIGRAARNARGTVVMYADAISDAMREAIEETARRRKIQMAYNRAHGITPRTIKKSIEDILVREQEVKKDAARVQVAPLLRAADADVRTHAARKKMVQALRLHMKVCARELRFEEAALIRDKILQLQRQDEQNGV</sequence>
<keyword id="KW-0067">ATP-binding</keyword>
<keyword id="KW-0963">Cytoplasm</keyword>
<keyword id="KW-0227">DNA damage</keyword>
<keyword id="KW-0228">DNA excision</keyword>
<keyword id="KW-0234">DNA repair</keyword>
<keyword id="KW-0267">Excision nuclease</keyword>
<keyword id="KW-0547">Nucleotide-binding</keyword>
<keyword id="KW-1185">Reference proteome</keyword>
<keyword id="KW-0742">SOS response</keyword>
<evidence type="ECO:0000255" key="1">
    <source>
        <dbReference type="HAMAP-Rule" id="MF_00204"/>
    </source>
</evidence>
<gene>
    <name evidence="1" type="primary">uvrB</name>
    <name type="ordered locus">TP_0116</name>
</gene>
<name>UVRB_TREPA</name>
<comment type="function">
    <text evidence="1">The UvrABC repair system catalyzes the recognition and processing of DNA lesions. A damage recognition complex composed of 2 UvrA and 2 UvrB subunits scans DNA for abnormalities. Upon binding of the UvrA(2)B(2) complex to a putative damaged site, the DNA wraps around one UvrB monomer. DNA wrap is dependent on ATP binding by UvrB and probably causes local melting of the DNA helix, facilitating insertion of UvrB beta-hairpin between the DNA strands. Then UvrB probes one DNA strand for the presence of a lesion. If a lesion is found the UvrA subunits dissociate and the UvrB-DNA preincision complex is formed. This complex is subsequently bound by UvrC and the second UvrB is released. If no lesion is found, the DNA wraps around the other UvrB subunit that will check the other stand for damage.</text>
</comment>
<comment type="subunit">
    <text evidence="1">Forms a heterotetramer with UvrA during the search for lesions. Interacts with UvrC in an incision complex.</text>
</comment>
<comment type="subcellular location">
    <subcellularLocation>
        <location evidence="1">Cytoplasm</location>
    </subcellularLocation>
</comment>
<comment type="domain">
    <text evidence="1">The beta-hairpin motif is involved in DNA binding.</text>
</comment>
<comment type="similarity">
    <text evidence="1">Belongs to the UvrB family.</text>
</comment>
<dbReference type="EMBL" id="AE000520">
    <property type="protein sequence ID" value="AAC65106.1"/>
    <property type="molecule type" value="Genomic_DNA"/>
</dbReference>
<dbReference type="PIR" id="C71365">
    <property type="entry name" value="C71365"/>
</dbReference>
<dbReference type="RefSeq" id="WP_010881565.1">
    <property type="nucleotide sequence ID" value="NC_021490.2"/>
</dbReference>
<dbReference type="SMR" id="O83154"/>
<dbReference type="STRING" id="243276.TP_0116"/>
<dbReference type="EnsemblBacteria" id="AAC65106">
    <property type="protein sequence ID" value="AAC65106"/>
    <property type="gene ID" value="TP_0116"/>
</dbReference>
<dbReference type="GeneID" id="93875913"/>
<dbReference type="KEGG" id="tpa:TP_0116"/>
<dbReference type="KEGG" id="tpw:TPANIC_0116"/>
<dbReference type="eggNOG" id="COG0556">
    <property type="taxonomic scope" value="Bacteria"/>
</dbReference>
<dbReference type="HOGENOM" id="CLU_009621_2_1_12"/>
<dbReference type="OrthoDB" id="9806651at2"/>
<dbReference type="Proteomes" id="UP000000811">
    <property type="component" value="Chromosome"/>
</dbReference>
<dbReference type="GO" id="GO:0005737">
    <property type="term" value="C:cytoplasm"/>
    <property type="evidence" value="ECO:0007669"/>
    <property type="project" value="UniProtKB-SubCell"/>
</dbReference>
<dbReference type="GO" id="GO:0009380">
    <property type="term" value="C:excinuclease repair complex"/>
    <property type="evidence" value="ECO:0007669"/>
    <property type="project" value="InterPro"/>
</dbReference>
<dbReference type="GO" id="GO:0005524">
    <property type="term" value="F:ATP binding"/>
    <property type="evidence" value="ECO:0007669"/>
    <property type="project" value="UniProtKB-UniRule"/>
</dbReference>
<dbReference type="GO" id="GO:0016887">
    <property type="term" value="F:ATP hydrolysis activity"/>
    <property type="evidence" value="ECO:0007669"/>
    <property type="project" value="InterPro"/>
</dbReference>
<dbReference type="GO" id="GO:0003677">
    <property type="term" value="F:DNA binding"/>
    <property type="evidence" value="ECO:0007669"/>
    <property type="project" value="UniProtKB-UniRule"/>
</dbReference>
<dbReference type="GO" id="GO:0009381">
    <property type="term" value="F:excinuclease ABC activity"/>
    <property type="evidence" value="ECO:0007669"/>
    <property type="project" value="UniProtKB-UniRule"/>
</dbReference>
<dbReference type="GO" id="GO:0006289">
    <property type="term" value="P:nucleotide-excision repair"/>
    <property type="evidence" value="ECO:0007669"/>
    <property type="project" value="UniProtKB-UniRule"/>
</dbReference>
<dbReference type="GO" id="GO:0009432">
    <property type="term" value="P:SOS response"/>
    <property type="evidence" value="ECO:0007669"/>
    <property type="project" value="UniProtKB-UniRule"/>
</dbReference>
<dbReference type="CDD" id="cd17916">
    <property type="entry name" value="DEXHc_UvrB"/>
    <property type="match status" value="1"/>
</dbReference>
<dbReference type="CDD" id="cd18790">
    <property type="entry name" value="SF2_C_UvrB"/>
    <property type="match status" value="1"/>
</dbReference>
<dbReference type="Gene3D" id="3.40.50.300">
    <property type="entry name" value="P-loop containing nucleotide triphosphate hydrolases"/>
    <property type="match status" value="3"/>
</dbReference>
<dbReference type="Gene3D" id="4.10.860.10">
    <property type="entry name" value="UVR domain"/>
    <property type="match status" value="1"/>
</dbReference>
<dbReference type="HAMAP" id="MF_00204">
    <property type="entry name" value="UvrB"/>
    <property type="match status" value="1"/>
</dbReference>
<dbReference type="InterPro" id="IPR006935">
    <property type="entry name" value="Helicase/UvrB_N"/>
</dbReference>
<dbReference type="InterPro" id="IPR014001">
    <property type="entry name" value="Helicase_ATP-bd"/>
</dbReference>
<dbReference type="InterPro" id="IPR001650">
    <property type="entry name" value="Helicase_C-like"/>
</dbReference>
<dbReference type="InterPro" id="IPR027417">
    <property type="entry name" value="P-loop_NTPase"/>
</dbReference>
<dbReference type="InterPro" id="IPR001943">
    <property type="entry name" value="UVR_dom"/>
</dbReference>
<dbReference type="InterPro" id="IPR036876">
    <property type="entry name" value="UVR_dom_sf"/>
</dbReference>
<dbReference type="InterPro" id="IPR004807">
    <property type="entry name" value="UvrB"/>
</dbReference>
<dbReference type="InterPro" id="IPR041471">
    <property type="entry name" value="UvrB_inter"/>
</dbReference>
<dbReference type="InterPro" id="IPR024759">
    <property type="entry name" value="UvrB_YAD/RRR_dom"/>
</dbReference>
<dbReference type="NCBIfam" id="NF003673">
    <property type="entry name" value="PRK05298.1"/>
    <property type="match status" value="1"/>
</dbReference>
<dbReference type="NCBIfam" id="TIGR00631">
    <property type="entry name" value="uvrb"/>
    <property type="match status" value="1"/>
</dbReference>
<dbReference type="PANTHER" id="PTHR24029">
    <property type="entry name" value="UVRABC SYSTEM PROTEIN B"/>
    <property type="match status" value="1"/>
</dbReference>
<dbReference type="PANTHER" id="PTHR24029:SF0">
    <property type="entry name" value="UVRABC SYSTEM PROTEIN B"/>
    <property type="match status" value="1"/>
</dbReference>
<dbReference type="Pfam" id="PF00271">
    <property type="entry name" value="Helicase_C"/>
    <property type="match status" value="1"/>
</dbReference>
<dbReference type="Pfam" id="PF04851">
    <property type="entry name" value="ResIII"/>
    <property type="match status" value="1"/>
</dbReference>
<dbReference type="Pfam" id="PF02151">
    <property type="entry name" value="UVR"/>
    <property type="match status" value="1"/>
</dbReference>
<dbReference type="Pfam" id="PF12344">
    <property type="entry name" value="UvrB"/>
    <property type="match status" value="1"/>
</dbReference>
<dbReference type="Pfam" id="PF17757">
    <property type="entry name" value="UvrB_inter"/>
    <property type="match status" value="1"/>
</dbReference>
<dbReference type="SMART" id="SM00487">
    <property type="entry name" value="DEXDc"/>
    <property type="match status" value="1"/>
</dbReference>
<dbReference type="SMART" id="SM00490">
    <property type="entry name" value="HELICc"/>
    <property type="match status" value="1"/>
</dbReference>
<dbReference type="SUPFAM" id="SSF46600">
    <property type="entry name" value="C-terminal UvrC-binding domain of UvrB"/>
    <property type="match status" value="1"/>
</dbReference>
<dbReference type="SUPFAM" id="SSF52540">
    <property type="entry name" value="P-loop containing nucleoside triphosphate hydrolases"/>
    <property type="match status" value="2"/>
</dbReference>
<dbReference type="PROSITE" id="PS51192">
    <property type="entry name" value="HELICASE_ATP_BIND_1"/>
    <property type="match status" value="1"/>
</dbReference>
<dbReference type="PROSITE" id="PS51194">
    <property type="entry name" value="HELICASE_CTER"/>
    <property type="match status" value="1"/>
</dbReference>
<dbReference type="PROSITE" id="PS50151">
    <property type="entry name" value="UVR"/>
    <property type="match status" value="1"/>
</dbReference>